<accession>Q88RW7</accession>
<keyword id="KW-0067">ATP-binding</keyword>
<keyword id="KW-0963">Cytoplasm</keyword>
<keyword id="KW-0227">DNA damage</keyword>
<keyword id="KW-0234">DNA repair</keyword>
<keyword id="KW-0235">DNA replication</keyword>
<keyword id="KW-0238">DNA-binding</keyword>
<keyword id="KW-0547">Nucleotide-binding</keyword>
<keyword id="KW-1185">Reference proteome</keyword>
<keyword id="KW-0742">SOS response</keyword>
<feature type="chain" id="PRO_0000196445" description="DNA replication and repair protein RecF">
    <location>
        <begin position="1"/>
        <end position="367"/>
    </location>
</feature>
<feature type="binding site" evidence="1">
    <location>
        <begin position="30"/>
        <end position="37"/>
    </location>
    <ligand>
        <name>ATP</name>
        <dbReference type="ChEBI" id="CHEBI:30616"/>
    </ligand>
</feature>
<name>RECF_PSEPK</name>
<organism>
    <name type="scientific">Pseudomonas putida (strain ATCC 47054 / DSM 6125 / CFBP 8728 / NCIMB 11950 / KT2440)</name>
    <dbReference type="NCBI Taxonomy" id="160488"/>
    <lineage>
        <taxon>Bacteria</taxon>
        <taxon>Pseudomonadati</taxon>
        <taxon>Pseudomonadota</taxon>
        <taxon>Gammaproteobacteria</taxon>
        <taxon>Pseudomonadales</taxon>
        <taxon>Pseudomonadaceae</taxon>
        <taxon>Pseudomonas</taxon>
    </lineage>
</organism>
<proteinExistence type="inferred from homology"/>
<reference key="1">
    <citation type="journal article" date="2002" name="Environ. Microbiol.">
        <title>Complete genome sequence and comparative analysis of the metabolically versatile Pseudomonas putida KT2440.</title>
        <authorList>
            <person name="Nelson K.E."/>
            <person name="Weinel C."/>
            <person name="Paulsen I.T."/>
            <person name="Dodson R.J."/>
            <person name="Hilbert H."/>
            <person name="Martins dos Santos V.A.P."/>
            <person name="Fouts D.E."/>
            <person name="Gill S.R."/>
            <person name="Pop M."/>
            <person name="Holmes M."/>
            <person name="Brinkac L.M."/>
            <person name="Beanan M.J."/>
            <person name="DeBoy R.T."/>
            <person name="Daugherty S.C."/>
            <person name="Kolonay J.F."/>
            <person name="Madupu R."/>
            <person name="Nelson W.C."/>
            <person name="White O."/>
            <person name="Peterson J.D."/>
            <person name="Khouri H.M."/>
            <person name="Hance I."/>
            <person name="Chris Lee P."/>
            <person name="Holtzapple E.K."/>
            <person name="Scanlan D."/>
            <person name="Tran K."/>
            <person name="Moazzez A."/>
            <person name="Utterback T.R."/>
            <person name="Rizzo M."/>
            <person name="Lee K."/>
            <person name="Kosack D."/>
            <person name="Moestl D."/>
            <person name="Wedler H."/>
            <person name="Lauber J."/>
            <person name="Stjepandic D."/>
            <person name="Hoheisel J."/>
            <person name="Straetz M."/>
            <person name="Heim S."/>
            <person name="Kiewitz C."/>
            <person name="Eisen J.A."/>
            <person name="Timmis K.N."/>
            <person name="Duesterhoeft A."/>
            <person name="Tuemmler B."/>
            <person name="Fraser C.M."/>
        </authorList>
    </citation>
    <scope>NUCLEOTIDE SEQUENCE [LARGE SCALE GENOMIC DNA]</scope>
    <source>
        <strain>ATCC 47054 / DSM 6125 / CFBP 8728 / NCIMB 11950 / KT2440</strain>
    </source>
</reference>
<comment type="function">
    <text evidence="1">The RecF protein is involved in DNA metabolism; it is required for DNA replication and normal SOS inducibility. RecF binds preferentially to single-stranded, linear DNA. It also seems to bind ATP.</text>
</comment>
<comment type="subcellular location">
    <subcellularLocation>
        <location evidence="1">Cytoplasm</location>
    </subcellularLocation>
</comment>
<comment type="similarity">
    <text evidence="1">Belongs to the RecF family.</text>
</comment>
<sequence>MSLRRIMVTAVRNLHPVTLLPSPRINILYGANGSGKTSVLEAVHLLGLARSFRSTRLNPVIQYEQAACTVFGEVQLTEGGTSNLGVSRERQGEFTIRIDGQNARSAAQLAELLPLQLINPDSFRLLEGAPKIRRQFLDWGVFHVEPRFLPAWQRLQKALRQRNSWLRHGTLDPASQAAWDRELCLASAEIDEYRRNYIKALKPVFERTLSELVELDGLTLSYYRGWDKDRELQEVLASSLLRDQQMGHTQAGPQRADLRLRLAGNNAADILSRGQQKLVVCALRIAQGHLVSQARRGHCIYLVDDLPSELDDQHRRALCRLLEELRCQVFITCVDHELLREGWQTETPVALFHVEQGRITQTHDHRE</sequence>
<protein>
    <recommendedName>
        <fullName evidence="1">DNA replication and repair protein RecF</fullName>
    </recommendedName>
</protein>
<gene>
    <name evidence="1" type="primary">recF</name>
    <name type="ordered locus">PP_0012</name>
</gene>
<dbReference type="EMBL" id="AE015451">
    <property type="protein sequence ID" value="AAN65646.1"/>
    <property type="molecule type" value="Genomic_DNA"/>
</dbReference>
<dbReference type="RefSeq" id="NP_742182.1">
    <property type="nucleotide sequence ID" value="NC_002947.4"/>
</dbReference>
<dbReference type="RefSeq" id="WP_003253154.1">
    <property type="nucleotide sequence ID" value="NZ_CP169744.1"/>
</dbReference>
<dbReference type="SMR" id="Q88RW7"/>
<dbReference type="STRING" id="160488.PP_0012"/>
<dbReference type="PaxDb" id="160488-PP_0012"/>
<dbReference type="DNASU" id="1043488"/>
<dbReference type="GeneID" id="83677292"/>
<dbReference type="KEGG" id="ppu:PP_0012"/>
<dbReference type="PATRIC" id="fig|160488.4.peg.12"/>
<dbReference type="eggNOG" id="COG1195">
    <property type="taxonomic scope" value="Bacteria"/>
</dbReference>
<dbReference type="HOGENOM" id="CLU_040267_0_0_6"/>
<dbReference type="OrthoDB" id="9803889at2"/>
<dbReference type="PhylomeDB" id="Q88RW7"/>
<dbReference type="BioCyc" id="PPUT160488:G1G01-12-MONOMER"/>
<dbReference type="Proteomes" id="UP000000556">
    <property type="component" value="Chromosome"/>
</dbReference>
<dbReference type="GO" id="GO:0005737">
    <property type="term" value="C:cytoplasm"/>
    <property type="evidence" value="ECO:0007669"/>
    <property type="project" value="UniProtKB-SubCell"/>
</dbReference>
<dbReference type="GO" id="GO:0005524">
    <property type="term" value="F:ATP binding"/>
    <property type="evidence" value="ECO:0007669"/>
    <property type="project" value="UniProtKB-UniRule"/>
</dbReference>
<dbReference type="GO" id="GO:0003697">
    <property type="term" value="F:single-stranded DNA binding"/>
    <property type="evidence" value="ECO:0007669"/>
    <property type="project" value="UniProtKB-UniRule"/>
</dbReference>
<dbReference type="GO" id="GO:0006260">
    <property type="term" value="P:DNA replication"/>
    <property type="evidence" value="ECO:0007669"/>
    <property type="project" value="UniProtKB-UniRule"/>
</dbReference>
<dbReference type="GO" id="GO:0000731">
    <property type="term" value="P:DNA synthesis involved in DNA repair"/>
    <property type="evidence" value="ECO:0007669"/>
    <property type="project" value="TreeGrafter"/>
</dbReference>
<dbReference type="GO" id="GO:0006302">
    <property type="term" value="P:double-strand break repair"/>
    <property type="evidence" value="ECO:0007669"/>
    <property type="project" value="TreeGrafter"/>
</dbReference>
<dbReference type="GO" id="GO:0009432">
    <property type="term" value="P:SOS response"/>
    <property type="evidence" value="ECO:0007669"/>
    <property type="project" value="UniProtKB-UniRule"/>
</dbReference>
<dbReference type="FunFam" id="1.20.1050.90:FF:000003">
    <property type="entry name" value="DNA replication and repair protein RecF"/>
    <property type="match status" value="1"/>
</dbReference>
<dbReference type="Gene3D" id="3.40.50.300">
    <property type="entry name" value="P-loop containing nucleotide triphosphate hydrolases"/>
    <property type="match status" value="1"/>
</dbReference>
<dbReference type="Gene3D" id="1.20.1050.90">
    <property type="entry name" value="RecF/RecN/SMC, N-terminal domain"/>
    <property type="match status" value="1"/>
</dbReference>
<dbReference type="HAMAP" id="MF_00365">
    <property type="entry name" value="RecF"/>
    <property type="match status" value="1"/>
</dbReference>
<dbReference type="InterPro" id="IPR001238">
    <property type="entry name" value="DNA-binding_RecF"/>
</dbReference>
<dbReference type="InterPro" id="IPR018078">
    <property type="entry name" value="DNA-binding_RecF_CS"/>
</dbReference>
<dbReference type="InterPro" id="IPR027417">
    <property type="entry name" value="P-loop_NTPase"/>
</dbReference>
<dbReference type="InterPro" id="IPR003395">
    <property type="entry name" value="RecF/RecN/SMC_N"/>
</dbReference>
<dbReference type="InterPro" id="IPR042174">
    <property type="entry name" value="RecF_2"/>
</dbReference>
<dbReference type="NCBIfam" id="TIGR00611">
    <property type="entry name" value="recf"/>
    <property type="match status" value="1"/>
</dbReference>
<dbReference type="PANTHER" id="PTHR32182">
    <property type="entry name" value="DNA REPLICATION AND REPAIR PROTEIN RECF"/>
    <property type="match status" value="1"/>
</dbReference>
<dbReference type="PANTHER" id="PTHR32182:SF0">
    <property type="entry name" value="DNA REPLICATION AND REPAIR PROTEIN RECF"/>
    <property type="match status" value="1"/>
</dbReference>
<dbReference type="Pfam" id="PF02463">
    <property type="entry name" value="SMC_N"/>
    <property type="match status" value="1"/>
</dbReference>
<dbReference type="SUPFAM" id="SSF52540">
    <property type="entry name" value="P-loop containing nucleoside triphosphate hydrolases"/>
    <property type="match status" value="1"/>
</dbReference>
<dbReference type="PROSITE" id="PS00617">
    <property type="entry name" value="RECF_1"/>
    <property type="match status" value="1"/>
</dbReference>
<dbReference type="PROSITE" id="PS00618">
    <property type="entry name" value="RECF_2"/>
    <property type="match status" value="1"/>
</dbReference>
<evidence type="ECO:0000255" key="1">
    <source>
        <dbReference type="HAMAP-Rule" id="MF_00365"/>
    </source>
</evidence>